<gene>
    <name evidence="1" type="primary">rplR</name>
    <name type="ordered locus">Xaut_4782</name>
</gene>
<protein>
    <recommendedName>
        <fullName evidence="1">Large ribosomal subunit protein uL18</fullName>
    </recommendedName>
    <alternativeName>
        <fullName evidence="2">50S ribosomal protein L18</fullName>
    </alternativeName>
</protein>
<organism>
    <name type="scientific">Xanthobacter autotrophicus (strain ATCC BAA-1158 / Py2)</name>
    <dbReference type="NCBI Taxonomy" id="78245"/>
    <lineage>
        <taxon>Bacteria</taxon>
        <taxon>Pseudomonadati</taxon>
        <taxon>Pseudomonadota</taxon>
        <taxon>Alphaproteobacteria</taxon>
        <taxon>Hyphomicrobiales</taxon>
        <taxon>Xanthobacteraceae</taxon>
        <taxon>Xanthobacter</taxon>
    </lineage>
</organism>
<keyword id="KW-1185">Reference proteome</keyword>
<keyword id="KW-0687">Ribonucleoprotein</keyword>
<keyword id="KW-0689">Ribosomal protein</keyword>
<keyword id="KW-0694">RNA-binding</keyword>
<keyword id="KW-0699">rRNA-binding</keyword>
<dbReference type="EMBL" id="CP000781">
    <property type="protein sequence ID" value="ABS70000.1"/>
    <property type="molecule type" value="Genomic_DNA"/>
</dbReference>
<dbReference type="SMR" id="A7IPQ4"/>
<dbReference type="STRING" id="78245.Xaut_4782"/>
<dbReference type="KEGG" id="xau:Xaut_4782"/>
<dbReference type="eggNOG" id="COG0256">
    <property type="taxonomic scope" value="Bacteria"/>
</dbReference>
<dbReference type="HOGENOM" id="CLU_098841_0_1_5"/>
<dbReference type="OrthoDB" id="9810939at2"/>
<dbReference type="PhylomeDB" id="A7IPQ4"/>
<dbReference type="Proteomes" id="UP000002417">
    <property type="component" value="Chromosome"/>
</dbReference>
<dbReference type="GO" id="GO:0005737">
    <property type="term" value="C:cytoplasm"/>
    <property type="evidence" value="ECO:0007669"/>
    <property type="project" value="UniProtKB-ARBA"/>
</dbReference>
<dbReference type="GO" id="GO:1990904">
    <property type="term" value="C:ribonucleoprotein complex"/>
    <property type="evidence" value="ECO:0007669"/>
    <property type="project" value="UniProtKB-KW"/>
</dbReference>
<dbReference type="GO" id="GO:0005840">
    <property type="term" value="C:ribosome"/>
    <property type="evidence" value="ECO:0007669"/>
    <property type="project" value="UniProtKB-KW"/>
</dbReference>
<dbReference type="GO" id="GO:0008097">
    <property type="term" value="F:5S rRNA binding"/>
    <property type="evidence" value="ECO:0007669"/>
    <property type="project" value="TreeGrafter"/>
</dbReference>
<dbReference type="GO" id="GO:0003735">
    <property type="term" value="F:structural constituent of ribosome"/>
    <property type="evidence" value="ECO:0007669"/>
    <property type="project" value="InterPro"/>
</dbReference>
<dbReference type="GO" id="GO:0006412">
    <property type="term" value="P:translation"/>
    <property type="evidence" value="ECO:0007669"/>
    <property type="project" value="UniProtKB-UniRule"/>
</dbReference>
<dbReference type="CDD" id="cd00432">
    <property type="entry name" value="Ribosomal_L18_L5e"/>
    <property type="match status" value="1"/>
</dbReference>
<dbReference type="FunFam" id="3.30.420.100:FF:000001">
    <property type="entry name" value="50S ribosomal protein L18"/>
    <property type="match status" value="1"/>
</dbReference>
<dbReference type="Gene3D" id="3.30.420.100">
    <property type="match status" value="1"/>
</dbReference>
<dbReference type="HAMAP" id="MF_01337_B">
    <property type="entry name" value="Ribosomal_uL18_B"/>
    <property type="match status" value="1"/>
</dbReference>
<dbReference type="InterPro" id="IPR004389">
    <property type="entry name" value="Ribosomal_uL18_bac-type"/>
</dbReference>
<dbReference type="InterPro" id="IPR005484">
    <property type="entry name" value="Ribosomal_uL18_bac/euk"/>
</dbReference>
<dbReference type="NCBIfam" id="TIGR00060">
    <property type="entry name" value="L18_bact"/>
    <property type="match status" value="1"/>
</dbReference>
<dbReference type="PANTHER" id="PTHR12899">
    <property type="entry name" value="39S RIBOSOMAL PROTEIN L18, MITOCHONDRIAL"/>
    <property type="match status" value="1"/>
</dbReference>
<dbReference type="PANTHER" id="PTHR12899:SF3">
    <property type="entry name" value="LARGE RIBOSOMAL SUBUNIT PROTEIN UL18M"/>
    <property type="match status" value="1"/>
</dbReference>
<dbReference type="Pfam" id="PF00861">
    <property type="entry name" value="Ribosomal_L18p"/>
    <property type="match status" value="1"/>
</dbReference>
<dbReference type="SUPFAM" id="SSF53137">
    <property type="entry name" value="Translational machinery components"/>
    <property type="match status" value="1"/>
</dbReference>
<feature type="chain" id="PRO_1000142741" description="Large ribosomal subunit protein uL18">
    <location>
        <begin position="1"/>
        <end position="120"/>
    </location>
</feature>
<comment type="function">
    <text evidence="1">This is one of the proteins that bind and probably mediate the attachment of the 5S RNA into the large ribosomal subunit, where it forms part of the central protuberance.</text>
</comment>
<comment type="subunit">
    <text evidence="1">Part of the 50S ribosomal subunit; part of the 5S rRNA/L5/L18/L25 subcomplex. Contacts the 5S and 23S rRNAs.</text>
</comment>
<comment type="similarity">
    <text evidence="1">Belongs to the universal ribosomal protein uL18 family.</text>
</comment>
<sequence length="120" mass="12854">MAKDLEALARRKAKVRRAIRVAANGRPRLSVHRTSQHIYAQVIDDANGETLAAASSLEKDLRTSLKTGADTDAAKTIGKLVAERALAKGVTAVVFDRGAYIFHGRVKALAEGAREGGLQF</sequence>
<reference key="1">
    <citation type="submission" date="2007-07" db="EMBL/GenBank/DDBJ databases">
        <title>Complete sequence of chromosome of Xanthobacter autotrophicus Py2.</title>
        <authorList>
            <consortium name="US DOE Joint Genome Institute"/>
            <person name="Copeland A."/>
            <person name="Lucas S."/>
            <person name="Lapidus A."/>
            <person name="Barry K."/>
            <person name="Glavina del Rio T."/>
            <person name="Hammon N."/>
            <person name="Israni S."/>
            <person name="Dalin E."/>
            <person name="Tice H."/>
            <person name="Pitluck S."/>
            <person name="Sims D."/>
            <person name="Brettin T."/>
            <person name="Bruce D."/>
            <person name="Detter J.C."/>
            <person name="Han C."/>
            <person name="Tapia R."/>
            <person name="Brainard J."/>
            <person name="Schmutz J."/>
            <person name="Larimer F."/>
            <person name="Land M."/>
            <person name="Hauser L."/>
            <person name="Kyrpides N."/>
            <person name="Kim E."/>
            <person name="Ensigns S.A."/>
            <person name="Richardson P."/>
        </authorList>
    </citation>
    <scope>NUCLEOTIDE SEQUENCE [LARGE SCALE GENOMIC DNA]</scope>
    <source>
        <strain>ATCC BAA-1158 / Py2</strain>
    </source>
</reference>
<evidence type="ECO:0000255" key="1">
    <source>
        <dbReference type="HAMAP-Rule" id="MF_01337"/>
    </source>
</evidence>
<evidence type="ECO:0000305" key="2"/>
<name>RL18_XANP2</name>
<accession>A7IPQ4</accession>
<proteinExistence type="inferred from homology"/>